<name>ILVD_CAMC5</name>
<accession>A7GVT2</accession>
<organism>
    <name type="scientific">Campylobacter curvus (strain 525.92)</name>
    <dbReference type="NCBI Taxonomy" id="360105"/>
    <lineage>
        <taxon>Bacteria</taxon>
        <taxon>Pseudomonadati</taxon>
        <taxon>Campylobacterota</taxon>
        <taxon>Epsilonproteobacteria</taxon>
        <taxon>Campylobacterales</taxon>
        <taxon>Campylobacteraceae</taxon>
        <taxon>Campylobacter</taxon>
    </lineage>
</organism>
<comment type="function">
    <text evidence="1">Functions in the biosynthesis of branched-chain amino acids. Catalyzes the dehydration of (2R,3R)-2,3-dihydroxy-3-methylpentanoate (2,3-dihydroxy-3-methylvalerate) into 2-oxo-3-methylpentanoate (2-oxo-3-methylvalerate) and of (2R)-2,3-dihydroxy-3-methylbutanoate (2,3-dihydroxyisovalerate) into 2-oxo-3-methylbutanoate (2-oxoisovalerate), the penultimate precursor to L-isoleucine and L-valine, respectively.</text>
</comment>
<comment type="catalytic activity">
    <reaction evidence="1">
        <text>(2R)-2,3-dihydroxy-3-methylbutanoate = 3-methyl-2-oxobutanoate + H2O</text>
        <dbReference type="Rhea" id="RHEA:24809"/>
        <dbReference type="ChEBI" id="CHEBI:11851"/>
        <dbReference type="ChEBI" id="CHEBI:15377"/>
        <dbReference type="ChEBI" id="CHEBI:49072"/>
        <dbReference type="EC" id="4.2.1.9"/>
    </reaction>
    <physiologicalReaction direction="left-to-right" evidence="1">
        <dbReference type="Rhea" id="RHEA:24810"/>
    </physiologicalReaction>
</comment>
<comment type="catalytic activity">
    <reaction evidence="1">
        <text>(2R,3R)-2,3-dihydroxy-3-methylpentanoate = (S)-3-methyl-2-oxopentanoate + H2O</text>
        <dbReference type="Rhea" id="RHEA:27694"/>
        <dbReference type="ChEBI" id="CHEBI:15377"/>
        <dbReference type="ChEBI" id="CHEBI:35146"/>
        <dbReference type="ChEBI" id="CHEBI:49258"/>
        <dbReference type="EC" id="4.2.1.9"/>
    </reaction>
    <physiologicalReaction direction="left-to-right" evidence="1">
        <dbReference type="Rhea" id="RHEA:27695"/>
    </physiologicalReaction>
</comment>
<comment type="cofactor">
    <cofactor evidence="1">
        <name>[2Fe-2S] cluster</name>
        <dbReference type="ChEBI" id="CHEBI:190135"/>
    </cofactor>
    <text evidence="1">Binds 1 [2Fe-2S] cluster per subunit. This cluster acts as a Lewis acid cofactor.</text>
</comment>
<comment type="cofactor">
    <cofactor evidence="1">
        <name>Mg(2+)</name>
        <dbReference type="ChEBI" id="CHEBI:18420"/>
    </cofactor>
</comment>
<comment type="pathway">
    <text evidence="1">Amino-acid biosynthesis; L-isoleucine biosynthesis; L-isoleucine from 2-oxobutanoate: step 3/4.</text>
</comment>
<comment type="pathway">
    <text evidence="1">Amino-acid biosynthesis; L-valine biosynthesis; L-valine from pyruvate: step 3/4.</text>
</comment>
<comment type="subunit">
    <text evidence="1">Homodimer.</text>
</comment>
<comment type="similarity">
    <text evidence="1">Belongs to the IlvD/Edd family.</text>
</comment>
<keyword id="KW-0001">2Fe-2S</keyword>
<keyword id="KW-0028">Amino-acid biosynthesis</keyword>
<keyword id="KW-0100">Branched-chain amino acid biosynthesis</keyword>
<keyword id="KW-0408">Iron</keyword>
<keyword id="KW-0411">Iron-sulfur</keyword>
<keyword id="KW-0456">Lyase</keyword>
<keyword id="KW-0460">Magnesium</keyword>
<keyword id="KW-0479">Metal-binding</keyword>
<keyword id="KW-1185">Reference proteome</keyword>
<reference key="1">
    <citation type="submission" date="2007-07" db="EMBL/GenBank/DDBJ databases">
        <title>Genome sequence of Campylobacter curvus 525.92 isolated from human feces.</title>
        <authorList>
            <person name="Fouts D.E."/>
            <person name="Mongodin E.F."/>
            <person name="Puiu D."/>
            <person name="Sebastian Y."/>
            <person name="Miller W.G."/>
            <person name="Mandrell R.E."/>
            <person name="Lastovica A.J."/>
            <person name="Nelson K.E."/>
        </authorList>
    </citation>
    <scope>NUCLEOTIDE SEQUENCE [LARGE SCALE GENOMIC DNA]</scope>
    <source>
        <strain>525.92</strain>
    </source>
</reference>
<dbReference type="EC" id="4.2.1.9" evidence="1"/>
<dbReference type="EMBL" id="CP000767">
    <property type="protein sequence ID" value="EAU00811.1"/>
    <property type="molecule type" value="Genomic_DNA"/>
</dbReference>
<dbReference type="RefSeq" id="WP_011991623.1">
    <property type="nucleotide sequence ID" value="NC_009715.2"/>
</dbReference>
<dbReference type="SMR" id="A7GVT2"/>
<dbReference type="STRING" id="360105.CCV52592_2036"/>
<dbReference type="KEGG" id="ccv:CCV52592_2036"/>
<dbReference type="HOGENOM" id="CLU_014271_4_2_7"/>
<dbReference type="OrthoDB" id="9807077at2"/>
<dbReference type="UniPathway" id="UPA00047">
    <property type="reaction ID" value="UER00057"/>
</dbReference>
<dbReference type="UniPathway" id="UPA00049">
    <property type="reaction ID" value="UER00061"/>
</dbReference>
<dbReference type="Proteomes" id="UP000006380">
    <property type="component" value="Chromosome"/>
</dbReference>
<dbReference type="GO" id="GO:0005829">
    <property type="term" value="C:cytosol"/>
    <property type="evidence" value="ECO:0007669"/>
    <property type="project" value="TreeGrafter"/>
</dbReference>
<dbReference type="GO" id="GO:0051537">
    <property type="term" value="F:2 iron, 2 sulfur cluster binding"/>
    <property type="evidence" value="ECO:0007669"/>
    <property type="project" value="UniProtKB-UniRule"/>
</dbReference>
<dbReference type="GO" id="GO:0004160">
    <property type="term" value="F:dihydroxy-acid dehydratase activity"/>
    <property type="evidence" value="ECO:0007669"/>
    <property type="project" value="UniProtKB-UniRule"/>
</dbReference>
<dbReference type="GO" id="GO:0000287">
    <property type="term" value="F:magnesium ion binding"/>
    <property type="evidence" value="ECO:0007669"/>
    <property type="project" value="UniProtKB-UniRule"/>
</dbReference>
<dbReference type="GO" id="GO:0009097">
    <property type="term" value="P:isoleucine biosynthetic process"/>
    <property type="evidence" value="ECO:0007669"/>
    <property type="project" value="UniProtKB-UniRule"/>
</dbReference>
<dbReference type="GO" id="GO:0009099">
    <property type="term" value="P:L-valine biosynthetic process"/>
    <property type="evidence" value="ECO:0007669"/>
    <property type="project" value="UniProtKB-UniRule"/>
</dbReference>
<dbReference type="FunFam" id="3.50.30.80:FF:000001">
    <property type="entry name" value="Dihydroxy-acid dehydratase"/>
    <property type="match status" value="1"/>
</dbReference>
<dbReference type="Gene3D" id="3.50.30.80">
    <property type="entry name" value="IlvD/EDD C-terminal domain-like"/>
    <property type="match status" value="1"/>
</dbReference>
<dbReference type="HAMAP" id="MF_00012">
    <property type="entry name" value="IlvD"/>
    <property type="match status" value="1"/>
</dbReference>
<dbReference type="InterPro" id="IPR042096">
    <property type="entry name" value="Dihydro-acid_dehy_C"/>
</dbReference>
<dbReference type="InterPro" id="IPR004404">
    <property type="entry name" value="DihydroxyA_deHydtase"/>
</dbReference>
<dbReference type="InterPro" id="IPR020558">
    <property type="entry name" value="DiOHA_6PGluconate_deHydtase_CS"/>
</dbReference>
<dbReference type="InterPro" id="IPR056740">
    <property type="entry name" value="ILV_EDD_C"/>
</dbReference>
<dbReference type="InterPro" id="IPR000581">
    <property type="entry name" value="ILV_EDD_N"/>
</dbReference>
<dbReference type="InterPro" id="IPR037237">
    <property type="entry name" value="IlvD/EDD_N"/>
</dbReference>
<dbReference type="NCBIfam" id="TIGR00110">
    <property type="entry name" value="ilvD"/>
    <property type="match status" value="1"/>
</dbReference>
<dbReference type="NCBIfam" id="NF002068">
    <property type="entry name" value="PRK00911.1"/>
    <property type="match status" value="1"/>
</dbReference>
<dbReference type="PANTHER" id="PTHR43661">
    <property type="entry name" value="D-XYLONATE DEHYDRATASE"/>
    <property type="match status" value="1"/>
</dbReference>
<dbReference type="PANTHER" id="PTHR43661:SF3">
    <property type="entry name" value="D-XYLONATE DEHYDRATASE YAGF-RELATED"/>
    <property type="match status" value="1"/>
</dbReference>
<dbReference type="Pfam" id="PF24877">
    <property type="entry name" value="ILV_EDD_C"/>
    <property type="match status" value="1"/>
</dbReference>
<dbReference type="Pfam" id="PF00920">
    <property type="entry name" value="ILVD_EDD_N"/>
    <property type="match status" value="1"/>
</dbReference>
<dbReference type="SUPFAM" id="SSF143975">
    <property type="entry name" value="IlvD/EDD N-terminal domain-like"/>
    <property type="match status" value="1"/>
</dbReference>
<dbReference type="SUPFAM" id="SSF52016">
    <property type="entry name" value="LeuD/IlvD-like"/>
    <property type="match status" value="1"/>
</dbReference>
<dbReference type="PROSITE" id="PS00886">
    <property type="entry name" value="ILVD_EDD_1"/>
    <property type="match status" value="1"/>
</dbReference>
<dbReference type="PROSITE" id="PS00887">
    <property type="entry name" value="ILVD_EDD_2"/>
    <property type="match status" value="1"/>
</dbReference>
<proteinExistence type="inferred from homology"/>
<gene>
    <name evidence="1" type="primary">ilvD</name>
    <name type="ordered locus">Ccur92_00200</name>
    <name type="ORF">CCV52592_2036</name>
</gene>
<evidence type="ECO:0000255" key="1">
    <source>
        <dbReference type="HAMAP-Rule" id="MF_00012"/>
    </source>
</evidence>
<feature type="chain" id="PRO_1000000969" description="Dihydroxy-acid dehydratase">
    <location>
        <begin position="1"/>
        <end position="557"/>
    </location>
</feature>
<feature type="active site" description="Proton acceptor" evidence="1">
    <location>
        <position position="472"/>
    </location>
</feature>
<feature type="binding site" evidence="1">
    <location>
        <position position="78"/>
    </location>
    <ligand>
        <name>Mg(2+)</name>
        <dbReference type="ChEBI" id="CHEBI:18420"/>
    </ligand>
</feature>
<feature type="binding site" evidence="1">
    <location>
        <position position="119"/>
    </location>
    <ligand>
        <name>[2Fe-2S] cluster</name>
        <dbReference type="ChEBI" id="CHEBI:190135"/>
    </ligand>
</feature>
<feature type="binding site" evidence="1">
    <location>
        <position position="120"/>
    </location>
    <ligand>
        <name>Mg(2+)</name>
        <dbReference type="ChEBI" id="CHEBI:18420"/>
    </ligand>
</feature>
<feature type="binding site" description="via carbamate group" evidence="1">
    <location>
        <position position="121"/>
    </location>
    <ligand>
        <name>Mg(2+)</name>
        <dbReference type="ChEBI" id="CHEBI:18420"/>
    </ligand>
</feature>
<feature type="binding site" evidence="1">
    <location>
        <position position="192"/>
    </location>
    <ligand>
        <name>[2Fe-2S] cluster</name>
        <dbReference type="ChEBI" id="CHEBI:190135"/>
    </ligand>
</feature>
<feature type="binding site" evidence="1">
    <location>
        <position position="446"/>
    </location>
    <ligand>
        <name>Mg(2+)</name>
        <dbReference type="ChEBI" id="CHEBI:18420"/>
    </ligand>
</feature>
<feature type="modified residue" description="N6-carboxylysine" evidence="1">
    <location>
        <position position="121"/>
    </location>
</feature>
<protein>
    <recommendedName>
        <fullName evidence="1">Dihydroxy-acid dehydratase</fullName>
        <shortName evidence="1">DAD</shortName>
        <ecNumber evidence="1">4.2.1.9</ecNumber>
    </recommendedName>
</protein>
<sequence>MRSDVIKKGYTRAPHRSLLRATGLKDEDFSKPFIGVANSFIEIIPGHFFLNKYAEILKDEIRKNGCVPFEFNTIGVDDGIAMGHGGMLYSLPSREIIANSIETVMNAHALDALVCMPNCDKIVPGMVMGALRVNVPTIFVSGGPMRKGYTKSGQPIDLATAFEAVGKFETKEISEEELKEIECNACPSGGSCSGMFTANSMNTLCEAMGIALSGNGTILALTKEREELIRRAGRRICEIALDERFKIRNILNEKAVRNALVVDMAMGGSSNTVLHMLAISREAGVNLQISQLNKISQNIAHIAKISPSLPNVHMEDIGRAGGMNAVIKEISRRDNGMLHLENLTVSGETLGERVGLSEIKDESVIHKVENAYSKVGGLAILFGNLAEQGCVIKTAGIVGERKFSGKAVCFNSQDEAIAGISSGKVGKGDVVVIRYEGPRGGPGMQEMLSPTSLIMGRGLGADVALITDGRFSGATRGLSIGHISPEAAEGGMIGLLRDGDIIDIDVDTYSINVRLSEAETLKRKAEFKPVQKELKGKWLRQYQRLVTNASNGAILEA</sequence>